<comment type="similarity">
    <text evidence="2">Belongs to the chlamydial CPn_0742/CT_635/TC_0003 family.</text>
</comment>
<dbReference type="EMBL" id="AE001273">
    <property type="protein sequence ID" value="AAC68239.1"/>
    <property type="molecule type" value="Genomic_DNA"/>
</dbReference>
<dbReference type="PIR" id="G71489">
    <property type="entry name" value="G71489"/>
</dbReference>
<dbReference type="RefSeq" id="NP_220152.1">
    <property type="nucleotide sequence ID" value="NC_000117.1"/>
</dbReference>
<dbReference type="RefSeq" id="WP_009872005.1">
    <property type="nucleotide sequence ID" value="NC_000117.1"/>
</dbReference>
<dbReference type="SMR" id="O84640"/>
<dbReference type="STRING" id="272561.CT_635"/>
<dbReference type="EnsemblBacteria" id="AAC68239">
    <property type="protein sequence ID" value="AAC68239"/>
    <property type="gene ID" value="CT_635"/>
</dbReference>
<dbReference type="GeneID" id="884441"/>
<dbReference type="KEGG" id="ctr:CT_635"/>
<dbReference type="PATRIC" id="fig|272561.5.peg.695"/>
<dbReference type="HOGENOM" id="CLU_1793032_0_0_0"/>
<dbReference type="InParanoid" id="O84640"/>
<dbReference type="OrthoDB" id="18081at2"/>
<dbReference type="Proteomes" id="UP000000431">
    <property type="component" value="Chromosome"/>
</dbReference>
<proteinExistence type="inferred from homology"/>
<sequence>MKNNSAQKIIDSIKQILSIYKIDFEPSFGATLTDDNDLDYQMLIEKTQEKIQELDKRSQEILQQTGMTREQMEVFANNPDNFSPEEWRALENIRSSCNEYKKETEELIKEVTNDIGHSSHKSPTPKKTKSSSQKKSKKKNWIPL</sequence>
<keyword id="KW-1185">Reference proteome</keyword>
<evidence type="ECO:0000256" key="1">
    <source>
        <dbReference type="SAM" id="MobiDB-lite"/>
    </source>
</evidence>
<evidence type="ECO:0000305" key="2"/>
<organism>
    <name type="scientific">Chlamydia trachomatis serovar D (strain ATCC VR-885 / DSM 19411 / UW-3/Cx)</name>
    <dbReference type="NCBI Taxonomy" id="272561"/>
    <lineage>
        <taxon>Bacteria</taxon>
        <taxon>Pseudomonadati</taxon>
        <taxon>Chlamydiota</taxon>
        <taxon>Chlamydiia</taxon>
        <taxon>Chlamydiales</taxon>
        <taxon>Chlamydiaceae</taxon>
        <taxon>Chlamydia/Chlamydophila group</taxon>
        <taxon>Chlamydia</taxon>
    </lineage>
</organism>
<gene>
    <name type="ordered locus">CT_635</name>
</gene>
<feature type="chain" id="PRO_0000218426" description="Protein CT_635">
    <location>
        <begin position="1"/>
        <end position="144"/>
    </location>
</feature>
<feature type="region of interest" description="Disordered" evidence="1">
    <location>
        <begin position="110"/>
        <end position="144"/>
    </location>
</feature>
<feature type="compositionally biased region" description="Basic residues" evidence="1">
    <location>
        <begin position="118"/>
        <end position="144"/>
    </location>
</feature>
<accession>O84640</accession>
<reference key="1">
    <citation type="journal article" date="1998" name="Science">
        <title>Genome sequence of an obligate intracellular pathogen of humans: Chlamydia trachomatis.</title>
        <authorList>
            <person name="Stephens R.S."/>
            <person name="Kalman S."/>
            <person name="Lammel C.J."/>
            <person name="Fan J."/>
            <person name="Marathe R."/>
            <person name="Aravind L."/>
            <person name="Mitchell W.P."/>
            <person name="Olinger L."/>
            <person name="Tatusov R.L."/>
            <person name="Zhao Q."/>
            <person name="Koonin E.V."/>
            <person name="Davis R.W."/>
        </authorList>
    </citation>
    <scope>NUCLEOTIDE SEQUENCE [LARGE SCALE GENOMIC DNA]</scope>
    <source>
        <strain>ATCC VR-885 / DSM 19411 / UW-3/Cx</strain>
    </source>
</reference>
<protein>
    <recommendedName>
        <fullName>Protein CT_635</fullName>
    </recommendedName>
</protein>
<name>Y635_CHLTR</name>